<protein>
    <recommendedName>
        <fullName evidence="1">Small ribosomal subunit protein bS6</fullName>
    </recommendedName>
    <alternativeName>
        <fullName evidence="3">30S ribosomal protein S6</fullName>
    </alternativeName>
</protein>
<accession>Q5NN61</accession>
<keyword id="KW-1185">Reference proteome</keyword>
<keyword id="KW-0687">Ribonucleoprotein</keyword>
<keyword id="KW-0689">Ribosomal protein</keyword>
<keyword id="KW-0694">RNA-binding</keyword>
<keyword id="KW-0699">rRNA-binding</keyword>
<name>RS6_ZYMMO</name>
<sequence length="124" mass="14351">MPLYEHVFLARQDLAQTQVDGLAATATSIIEEKSGKVVKTEIWGLRNLAYRIQKNRKAYYIMLEIDAPADAIQELERQMALNEDVIRYMTVRVDAHEQGPSAMMRRGDRDRSNRSDRRRDRDAA</sequence>
<comment type="function">
    <text evidence="1">Binds together with bS18 to 16S ribosomal RNA.</text>
</comment>
<comment type="similarity">
    <text evidence="1">Belongs to the bacterial ribosomal protein bS6 family.</text>
</comment>
<feature type="chain" id="PRO_0000176883" description="Small ribosomal subunit protein bS6">
    <location>
        <begin position="1"/>
        <end position="124"/>
    </location>
</feature>
<feature type="region of interest" description="Disordered" evidence="2">
    <location>
        <begin position="97"/>
        <end position="124"/>
    </location>
</feature>
<feature type="compositionally biased region" description="Basic and acidic residues" evidence="2">
    <location>
        <begin position="105"/>
        <end position="124"/>
    </location>
</feature>
<evidence type="ECO:0000255" key="1">
    <source>
        <dbReference type="HAMAP-Rule" id="MF_00360"/>
    </source>
</evidence>
<evidence type="ECO:0000256" key="2">
    <source>
        <dbReference type="SAM" id="MobiDB-lite"/>
    </source>
</evidence>
<evidence type="ECO:0000305" key="3"/>
<proteinExistence type="inferred from homology"/>
<gene>
    <name evidence="1" type="primary">rpsF</name>
    <name type="ordered locus">ZMO1225</name>
</gene>
<reference key="1">
    <citation type="journal article" date="2005" name="Nat. Biotechnol.">
        <title>The genome sequence of the ethanologenic bacterium Zymomonas mobilis ZM4.</title>
        <authorList>
            <person name="Seo J.-S."/>
            <person name="Chong H."/>
            <person name="Park H.S."/>
            <person name="Yoon K.-O."/>
            <person name="Jung C."/>
            <person name="Kim J.J."/>
            <person name="Hong J.H."/>
            <person name="Kim H."/>
            <person name="Kim J.-H."/>
            <person name="Kil J.-I."/>
            <person name="Park C.J."/>
            <person name="Oh H.-M."/>
            <person name="Lee J.-S."/>
            <person name="Jin S.-J."/>
            <person name="Um H.-W."/>
            <person name="Lee H.-J."/>
            <person name="Oh S.-J."/>
            <person name="Kim J.Y."/>
            <person name="Kang H.L."/>
            <person name="Lee S.Y."/>
            <person name="Lee K.J."/>
            <person name="Kang H.S."/>
        </authorList>
    </citation>
    <scope>NUCLEOTIDE SEQUENCE [LARGE SCALE GENOMIC DNA]</scope>
    <source>
        <strain>ATCC 31821 / ZM4 / CP4</strain>
    </source>
</reference>
<dbReference type="EMBL" id="AE008692">
    <property type="protein sequence ID" value="AAV89849.1"/>
    <property type="molecule type" value="Genomic_DNA"/>
</dbReference>
<dbReference type="RefSeq" id="WP_011241042.1">
    <property type="nucleotide sequence ID" value="NZ_CP035711.1"/>
</dbReference>
<dbReference type="SMR" id="Q5NN61"/>
<dbReference type="STRING" id="264203.ZMO1225"/>
<dbReference type="GeneID" id="79903655"/>
<dbReference type="KEGG" id="zmo:ZMO1225"/>
<dbReference type="eggNOG" id="COG0360">
    <property type="taxonomic scope" value="Bacteria"/>
</dbReference>
<dbReference type="HOGENOM" id="CLU_113441_2_0_5"/>
<dbReference type="Proteomes" id="UP000001173">
    <property type="component" value="Chromosome"/>
</dbReference>
<dbReference type="GO" id="GO:0022627">
    <property type="term" value="C:cytosolic small ribosomal subunit"/>
    <property type="evidence" value="ECO:0007669"/>
    <property type="project" value="TreeGrafter"/>
</dbReference>
<dbReference type="GO" id="GO:0070181">
    <property type="term" value="F:small ribosomal subunit rRNA binding"/>
    <property type="evidence" value="ECO:0007669"/>
    <property type="project" value="TreeGrafter"/>
</dbReference>
<dbReference type="GO" id="GO:0003735">
    <property type="term" value="F:structural constituent of ribosome"/>
    <property type="evidence" value="ECO:0007669"/>
    <property type="project" value="InterPro"/>
</dbReference>
<dbReference type="GO" id="GO:0006412">
    <property type="term" value="P:translation"/>
    <property type="evidence" value="ECO:0007669"/>
    <property type="project" value="UniProtKB-UniRule"/>
</dbReference>
<dbReference type="CDD" id="cd00473">
    <property type="entry name" value="bS6"/>
    <property type="match status" value="1"/>
</dbReference>
<dbReference type="Gene3D" id="3.30.70.60">
    <property type="match status" value="1"/>
</dbReference>
<dbReference type="HAMAP" id="MF_00360">
    <property type="entry name" value="Ribosomal_bS6"/>
    <property type="match status" value="1"/>
</dbReference>
<dbReference type="InterPro" id="IPR000529">
    <property type="entry name" value="Ribosomal_bS6"/>
</dbReference>
<dbReference type="InterPro" id="IPR035980">
    <property type="entry name" value="Ribosomal_bS6_sf"/>
</dbReference>
<dbReference type="InterPro" id="IPR020814">
    <property type="entry name" value="Ribosomal_S6_plastid/chlpt"/>
</dbReference>
<dbReference type="InterPro" id="IPR014717">
    <property type="entry name" value="Transl_elong_EF1B/ribsomal_bS6"/>
</dbReference>
<dbReference type="NCBIfam" id="TIGR00166">
    <property type="entry name" value="S6"/>
    <property type="match status" value="1"/>
</dbReference>
<dbReference type="PANTHER" id="PTHR21011">
    <property type="entry name" value="MITOCHONDRIAL 28S RIBOSOMAL PROTEIN S6"/>
    <property type="match status" value="1"/>
</dbReference>
<dbReference type="PANTHER" id="PTHR21011:SF1">
    <property type="entry name" value="SMALL RIBOSOMAL SUBUNIT PROTEIN BS6M"/>
    <property type="match status" value="1"/>
</dbReference>
<dbReference type="Pfam" id="PF01250">
    <property type="entry name" value="Ribosomal_S6"/>
    <property type="match status" value="1"/>
</dbReference>
<dbReference type="SUPFAM" id="SSF54995">
    <property type="entry name" value="Ribosomal protein S6"/>
    <property type="match status" value="1"/>
</dbReference>
<organism>
    <name type="scientific">Zymomonas mobilis subsp. mobilis (strain ATCC 31821 / ZM4 / CP4)</name>
    <dbReference type="NCBI Taxonomy" id="264203"/>
    <lineage>
        <taxon>Bacteria</taxon>
        <taxon>Pseudomonadati</taxon>
        <taxon>Pseudomonadota</taxon>
        <taxon>Alphaproteobacteria</taxon>
        <taxon>Sphingomonadales</taxon>
        <taxon>Zymomonadaceae</taxon>
        <taxon>Zymomonas</taxon>
    </lineage>
</organism>